<name>REGA_BPT2</name>
<reference key="1">
    <citation type="journal article" date="1990" name="J. Bacteriol.">
        <title>Sequence analysis of conserved regA and variable orf43.1 genes in T4-like bacteriophages.</title>
        <authorList>
            <person name="Miller E.S."/>
            <person name="Jozwik C.E."/>
        </authorList>
    </citation>
    <scope>NUCLEOTIDE SEQUENCE [GENOMIC DNA]</scope>
</reference>
<evidence type="ECO:0000250" key="1"/>
<evidence type="ECO:0000255" key="2"/>
<protein>
    <recommendedName>
        <fullName>Translation repressor protein</fullName>
    </recommendedName>
</protein>
<feature type="chain" id="PRO_0000164967" description="Translation repressor protein">
    <location>
        <begin position="1"/>
        <end position="122"/>
    </location>
</feature>
<feature type="DNA-binding region" description="H-T-H motif" evidence="2">
    <location>
        <begin position="15"/>
        <end position="37"/>
    </location>
</feature>
<dbReference type="EMBL" id="M27737">
    <property type="protein sequence ID" value="AAA32478.1"/>
    <property type="molecule type" value="Genomic_DNA"/>
</dbReference>
<dbReference type="RefSeq" id="YP_010073696.1">
    <property type="nucleotide sequence ID" value="NC_054931.1"/>
</dbReference>
<dbReference type="SMR" id="P69701"/>
<dbReference type="GeneID" id="65062445"/>
<dbReference type="GO" id="GO:0003723">
    <property type="term" value="F:RNA binding"/>
    <property type="evidence" value="ECO:0007669"/>
    <property type="project" value="UniProtKB-KW"/>
</dbReference>
<dbReference type="GO" id="GO:0006417">
    <property type="term" value="P:regulation of translation"/>
    <property type="evidence" value="ECO:0007669"/>
    <property type="project" value="UniProtKB-KW"/>
</dbReference>
<dbReference type="Gene3D" id="3.30.70.650">
    <property type="entry name" value="Translation repressor RegA"/>
    <property type="match status" value="1"/>
</dbReference>
<dbReference type="InterPro" id="IPR002702">
    <property type="entry name" value="Transl_repress_RegA"/>
</dbReference>
<dbReference type="InterPro" id="IPR036516">
    <property type="entry name" value="Transl_repress_RegA_sf"/>
</dbReference>
<dbReference type="Pfam" id="PF01818">
    <property type="entry name" value="Translat_reg"/>
    <property type="match status" value="1"/>
</dbReference>
<dbReference type="SUPFAM" id="SSF55064">
    <property type="entry name" value="Translational regulator protein regA"/>
    <property type="match status" value="1"/>
</dbReference>
<keyword id="KW-0678">Repressor</keyword>
<keyword id="KW-0694">RNA-binding</keyword>
<keyword id="KW-0810">Translation regulation</keyword>
<organism>
    <name type="scientific">Enterobacteria phage T2</name>
    <name type="common">Bacteriophage T2</name>
    <dbReference type="NCBI Taxonomy" id="2060721"/>
    <lineage>
        <taxon>Viruses</taxon>
        <taxon>Duplodnaviria</taxon>
        <taxon>Heunggongvirae</taxon>
        <taxon>Uroviricota</taxon>
        <taxon>Caudoviricetes</taxon>
        <taxon>Straboviridae</taxon>
        <taxon>Tevenvirinae</taxon>
        <taxon>Tequatrovirus</taxon>
        <taxon>Tequatrovirus T2</taxon>
    </lineage>
</organism>
<gene>
    <name type="primary">regA</name>
</gene>
<sequence length="122" mass="14619">MIEITLKKPEDFLKVKETLTRMGIANNKDKVLYQSCHILQKKGLYYIVHFKEMLRMDGRQVEMTEEDEVRRDSIAWLLEDWGLIEIVPGQRTFMKDLTNNFRVISFKQKHEWKLVPKYTIGN</sequence>
<accession>P69701</accession>
<accession>P04528</accession>
<comment type="function">
    <text evidence="1">Controls the translation of a number of proteins (such as regA itself, rIIB and at least 35 others) by binding to their mRNA.</text>
</comment>
<organismHost>
    <name type="scientific">Escherichia coli</name>
    <dbReference type="NCBI Taxonomy" id="562"/>
</organismHost>
<proteinExistence type="inferred from homology"/>